<reference key="1">
    <citation type="journal article" date="2002" name="Proc. Natl. Acad. Sci. U.S.A.">
        <title>Extensive mosaic structure revealed by the complete genome sequence of uropathogenic Escherichia coli.</title>
        <authorList>
            <person name="Welch R.A."/>
            <person name="Burland V."/>
            <person name="Plunkett G. III"/>
            <person name="Redford P."/>
            <person name="Roesch P."/>
            <person name="Rasko D."/>
            <person name="Buckles E.L."/>
            <person name="Liou S.-R."/>
            <person name="Boutin A."/>
            <person name="Hackett J."/>
            <person name="Stroud D."/>
            <person name="Mayhew G.F."/>
            <person name="Rose D.J."/>
            <person name="Zhou S."/>
            <person name="Schwartz D.C."/>
            <person name="Perna N.T."/>
            <person name="Mobley H.L.T."/>
            <person name="Donnenberg M.S."/>
            <person name="Blattner F.R."/>
        </authorList>
    </citation>
    <scope>NUCLEOTIDE SEQUENCE [LARGE SCALE GENOMIC DNA]</scope>
    <source>
        <strain>CFT073 / ATCC 700928 / UPEC</strain>
    </source>
</reference>
<accession>P0A8W6</accession>
<accession>P52049</accession>
<accession>P76648</accession>
<proteinExistence type="inferred from homology"/>
<evidence type="ECO:0000305" key="1"/>
<name>YQGE_ECOL6</name>
<gene>
    <name type="primary">yqgE</name>
    <name type="ordered locus">c3534</name>
</gene>
<keyword id="KW-1185">Reference proteome</keyword>
<protein>
    <recommendedName>
        <fullName>UPF0301 protein YqgE</fullName>
    </recommendedName>
</protein>
<organism>
    <name type="scientific">Escherichia coli O6:H1 (strain CFT073 / ATCC 700928 / UPEC)</name>
    <dbReference type="NCBI Taxonomy" id="199310"/>
    <lineage>
        <taxon>Bacteria</taxon>
        <taxon>Pseudomonadati</taxon>
        <taxon>Pseudomonadota</taxon>
        <taxon>Gammaproteobacteria</taxon>
        <taxon>Enterobacterales</taxon>
        <taxon>Enterobacteriaceae</taxon>
        <taxon>Escherichia</taxon>
    </lineage>
</organism>
<sequence>MNLQHHFLIAMPALQDPIFRRSVVYICEHNTNGAMGIIVNKPLENLKIEGILEKLKITPEPRDESIRLDKPVMLGGPLAEDRGFILHTPPSNFASSIRISDNTVMTTSRDVLETLGTDKQPSDVLVALGYASWEKGQLEQEILDNAWLTAPADLNILFKTPIADRWREAAKLIGVDILTMPGVAGHA</sequence>
<comment type="similarity">
    <text evidence="1">Belongs to the UPF0301 (AlgH) family.</text>
</comment>
<comment type="sequence caution" evidence="1">
    <conflict type="erroneous initiation">
        <sequence resource="EMBL-CDS" id="AAN81982"/>
    </conflict>
</comment>
<feature type="chain" id="PRO_0000214324" description="UPF0301 protein YqgE">
    <location>
        <begin position="1"/>
        <end position="187"/>
    </location>
</feature>
<dbReference type="EMBL" id="AE014075">
    <property type="protein sequence ID" value="AAN81982.1"/>
    <property type="status" value="ALT_INIT"/>
    <property type="molecule type" value="Genomic_DNA"/>
</dbReference>
<dbReference type="RefSeq" id="WP_001053178.1">
    <property type="nucleotide sequence ID" value="NZ_CP051263.1"/>
</dbReference>
<dbReference type="SMR" id="P0A8W6"/>
<dbReference type="STRING" id="199310.c3534"/>
<dbReference type="KEGG" id="ecc:c3534"/>
<dbReference type="eggNOG" id="COG1678">
    <property type="taxonomic scope" value="Bacteria"/>
</dbReference>
<dbReference type="HOGENOM" id="CLU_057596_1_1_6"/>
<dbReference type="Proteomes" id="UP000001410">
    <property type="component" value="Chromosome"/>
</dbReference>
<dbReference type="GO" id="GO:0005829">
    <property type="term" value="C:cytosol"/>
    <property type="evidence" value="ECO:0007669"/>
    <property type="project" value="TreeGrafter"/>
</dbReference>
<dbReference type="FunFam" id="3.30.70.1300:FF:000001">
    <property type="entry name" value="UPF0301 protein YqgE"/>
    <property type="match status" value="1"/>
</dbReference>
<dbReference type="Gene3D" id="3.40.1740.10">
    <property type="entry name" value="VC0467-like"/>
    <property type="match status" value="1"/>
</dbReference>
<dbReference type="Gene3D" id="3.30.70.1300">
    <property type="entry name" value="VC0467-like domains"/>
    <property type="match status" value="1"/>
</dbReference>
<dbReference type="HAMAP" id="MF_00758">
    <property type="entry name" value="UPF0301"/>
    <property type="match status" value="1"/>
</dbReference>
<dbReference type="InterPro" id="IPR003774">
    <property type="entry name" value="AlgH-like"/>
</dbReference>
<dbReference type="NCBIfam" id="NF001266">
    <property type="entry name" value="PRK00228.1-1"/>
    <property type="match status" value="1"/>
</dbReference>
<dbReference type="PANTHER" id="PTHR30327">
    <property type="entry name" value="UNCHARACTERIZED PROTEIN YQGE"/>
    <property type="match status" value="1"/>
</dbReference>
<dbReference type="PANTHER" id="PTHR30327:SF1">
    <property type="entry name" value="UPF0301 PROTEIN YQGE"/>
    <property type="match status" value="1"/>
</dbReference>
<dbReference type="Pfam" id="PF02622">
    <property type="entry name" value="DUF179"/>
    <property type="match status" value="1"/>
</dbReference>
<dbReference type="SUPFAM" id="SSF143456">
    <property type="entry name" value="VC0467-like"/>
    <property type="match status" value="1"/>
</dbReference>